<accession>Q9FHW9</accession>
<accession>Q9FHW8</accession>
<dbReference type="EC" id="3.1.1.-"/>
<dbReference type="EMBL" id="AB017067">
    <property type="protein sequence ID" value="BAB08449.1"/>
    <property type="status" value="ALT_SEQ"/>
    <property type="molecule type" value="Genomic_DNA"/>
</dbReference>
<dbReference type="EMBL" id="AB017067">
    <property type="protein sequence ID" value="BAB08450.1"/>
    <property type="status" value="ALT_SEQ"/>
    <property type="molecule type" value="Genomic_DNA"/>
</dbReference>
<dbReference type="EMBL" id="CP002688">
    <property type="protein sequence ID" value="AED94775.1"/>
    <property type="molecule type" value="Genomic_DNA"/>
</dbReference>
<dbReference type="RefSeq" id="NP_199032.2">
    <property type="nucleotide sequence ID" value="NM_123582.3"/>
</dbReference>
<dbReference type="SMR" id="Q9FHW9"/>
<dbReference type="FunCoup" id="Q9FHW9">
    <property type="interactions" value="97"/>
</dbReference>
<dbReference type="GlyGen" id="Q9FHW9">
    <property type="glycosylation" value="4 sites"/>
</dbReference>
<dbReference type="PaxDb" id="3702-AT5G42170.1"/>
<dbReference type="ProteomicsDB" id="221997"/>
<dbReference type="EnsemblPlants" id="AT5G42170.1">
    <property type="protein sequence ID" value="AT5G42170.1"/>
    <property type="gene ID" value="AT5G42170"/>
</dbReference>
<dbReference type="Gramene" id="AT5G42170.1">
    <property type="protein sequence ID" value="AT5G42170.1"/>
    <property type="gene ID" value="AT5G42170"/>
</dbReference>
<dbReference type="KEGG" id="ath:AT5G42170"/>
<dbReference type="Araport" id="AT5G42170"/>
<dbReference type="TAIR" id="AT5G42170"/>
<dbReference type="eggNOG" id="ENOG502QW19">
    <property type="taxonomic scope" value="Eukaryota"/>
</dbReference>
<dbReference type="HOGENOM" id="CLU_015101_0_1_1"/>
<dbReference type="InParanoid" id="Q9FHW9"/>
<dbReference type="OMA" id="ENRTNFI"/>
<dbReference type="PhylomeDB" id="Q9FHW9"/>
<dbReference type="BioCyc" id="ARA:AT5G42170-MONOMER"/>
<dbReference type="PRO" id="PR:Q9FHW9"/>
<dbReference type="Proteomes" id="UP000006548">
    <property type="component" value="Chromosome 5"/>
</dbReference>
<dbReference type="ExpressionAtlas" id="Q9FHW9">
    <property type="expression patterns" value="baseline and differential"/>
</dbReference>
<dbReference type="GO" id="GO:0005576">
    <property type="term" value="C:extracellular region"/>
    <property type="evidence" value="ECO:0000318"/>
    <property type="project" value="GO_Central"/>
</dbReference>
<dbReference type="GO" id="GO:0016788">
    <property type="term" value="F:hydrolase activity, acting on ester bonds"/>
    <property type="evidence" value="ECO:0007669"/>
    <property type="project" value="InterPro"/>
</dbReference>
<dbReference type="GO" id="GO:0016042">
    <property type="term" value="P:lipid catabolic process"/>
    <property type="evidence" value="ECO:0007669"/>
    <property type="project" value="UniProtKB-KW"/>
</dbReference>
<dbReference type="CDD" id="cd01837">
    <property type="entry name" value="SGNH_plant_lipase_like"/>
    <property type="match status" value="1"/>
</dbReference>
<dbReference type="FunFam" id="3.40.50.1110:FF:000003">
    <property type="entry name" value="GDSL esterase/lipase APG"/>
    <property type="match status" value="1"/>
</dbReference>
<dbReference type="Gene3D" id="3.40.50.1110">
    <property type="entry name" value="SGNH hydrolase"/>
    <property type="match status" value="1"/>
</dbReference>
<dbReference type="InterPro" id="IPR001087">
    <property type="entry name" value="GDSL"/>
</dbReference>
<dbReference type="InterPro" id="IPR050592">
    <property type="entry name" value="GDSL_lipolytic_enzyme"/>
</dbReference>
<dbReference type="InterPro" id="IPR036514">
    <property type="entry name" value="SGNH_hydro_sf"/>
</dbReference>
<dbReference type="InterPro" id="IPR035669">
    <property type="entry name" value="SGNH_plant_lipase-like"/>
</dbReference>
<dbReference type="PANTHER" id="PTHR45642:SF134">
    <property type="entry name" value="BNAC02G29810D PROTEIN"/>
    <property type="match status" value="1"/>
</dbReference>
<dbReference type="PANTHER" id="PTHR45642">
    <property type="entry name" value="GDSL ESTERASE/LIPASE EXL3"/>
    <property type="match status" value="1"/>
</dbReference>
<dbReference type="Pfam" id="PF00657">
    <property type="entry name" value="Lipase_GDSL"/>
    <property type="match status" value="1"/>
</dbReference>
<dbReference type="SUPFAM" id="SSF52266">
    <property type="entry name" value="SGNH hydrolase"/>
    <property type="match status" value="1"/>
</dbReference>
<gene>
    <name type="ordered locus">At5g42170/At5g42160</name>
    <name type="ORF">MJC20.28/MJC20.27</name>
</gene>
<sequence length="369" mass="40530">MSRLVYVIFLLVVVEGSRNTLERNTETNATEAKVEGKGTIKLPPNVTIPGIITFGDSIVDSGNNNHLRTALKCNFPPYGKDFPGKIATGRFSDGRVPSDIVAERLGIAETIPAYLNPKLKNEDLLKGVNFASGGSGYDPLTAKLVKVVSLSDQLKNFQEYKNKLKVIVGEEKANFLVKNSLYLVVASSNDIAHTYTARSIKYNKTSYADYLADSASKFVSALYGLGARRIGVFSAVPVGCVPAARTLRGKLKRRCSEKLNEVARNFNAKISPTLEALGKELPDSRVVLIDVCDTLNDMIENPKNYGFEVSNRGCCGTGLVEVLFLCNKINPFTCKNSSSYIFWDSYHPTEKAYQIIVDKLLGNYITKLV</sequence>
<proteinExistence type="inferred from homology"/>
<evidence type="ECO:0000250" key="1"/>
<evidence type="ECO:0000255" key="2"/>
<evidence type="ECO:0000305" key="3"/>
<organism>
    <name type="scientific">Arabidopsis thaliana</name>
    <name type="common">Mouse-ear cress</name>
    <dbReference type="NCBI Taxonomy" id="3702"/>
    <lineage>
        <taxon>Eukaryota</taxon>
        <taxon>Viridiplantae</taxon>
        <taxon>Streptophyta</taxon>
        <taxon>Embryophyta</taxon>
        <taxon>Tracheophyta</taxon>
        <taxon>Spermatophyta</taxon>
        <taxon>Magnoliopsida</taxon>
        <taxon>eudicotyledons</taxon>
        <taxon>Gunneridae</taxon>
        <taxon>Pentapetalae</taxon>
        <taxon>rosids</taxon>
        <taxon>malvids</taxon>
        <taxon>Brassicales</taxon>
        <taxon>Brassicaceae</taxon>
        <taxon>Camelineae</taxon>
        <taxon>Arabidopsis</taxon>
    </lineage>
</organism>
<feature type="signal peptide" evidence="2">
    <location>
        <begin position="1"/>
        <end position="16"/>
    </location>
</feature>
<feature type="chain" id="PRO_0000367430" description="GDSL esterase/lipase At5g42170">
    <location>
        <begin position="17"/>
        <end position="369"/>
    </location>
</feature>
<feature type="active site" description="Nucleophile" evidence="1">
    <location>
        <position position="57"/>
    </location>
</feature>
<feature type="active site" evidence="1">
    <location>
        <position position="344"/>
    </location>
</feature>
<feature type="active site" evidence="1">
    <location>
        <position position="347"/>
    </location>
</feature>
<feature type="glycosylation site" description="N-linked (GlcNAc...) asparagine" evidence="2">
    <location>
        <position position="28"/>
    </location>
</feature>
<feature type="glycosylation site" description="N-linked (GlcNAc...) asparagine" evidence="2">
    <location>
        <position position="45"/>
    </location>
</feature>
<feature type="glycosylation site" description="N-linked (GlcNAc...) asparagine" evidence="2">
    <location>
        <position position="203"/>
    </location>
</feature>
<feature type="glycosylation site" description="N-linked (GlcNAc...) asparagine" evidence="2">
    <location>
        <position position="336"/>
    </location>
</feature>
<comment type="subcellular location">
    <subcellularLocation>
        <location evidence="3">Secreted</location>
    </subcellularLocation>
</comment>
<comment type="similarity">
    <text evidence="3">Belongs to the 'GDSL' lipolytic enzyme family.</text>
</comment>
<comment type="sequence caution" evidence="3">
    <conflict type="erroneous gene model prediction">
        <sequence resource="EMBL-CDS" id="BAB08449"/>
    </conflict>
    <text>Was originally thought to correspond to two different genes At5g42160 and At5g42170.</text>
</comment>
<comment type="sequence caution" evidence="3">
    <conflict type="erroneous gene model prediction">
        <sequence resource="EMBL-CDS" id="BAB08450"/>
    </conflict>
    <text>Was originally thought to correspond to two different genes At5g42160 and At5g42170.</text>
</comment>
<name>GDL90_ARATH</name>
<protein>
    <recommendedName>
        <fullName>GDSL esterase/lipase At5g42170</fullName>
        <ecNumber>3.1.1.-</ecNumber>
    </recommendedName>
    <alternativeName>
        <fullName>Extracellular lipase At5g42170</fullName>
    </alternativeName>
</protein>
<reference key="1">
    <citation type="journal article" date="1999" name="DNA Res.">
        <title>Structural analysis of Arabidopsis thaliana chromosome 5. IX. Sequence features of the regions of 1,011,550 bp covered by seventeen P1 and TAC clones.</title>
        <authorList>
            <person name="Kaneko T."/>
            <person name="Katoh T."/>
            <person name="Sato S."/>
            <person name="Nakamura Y."/>
            <person name="Asamizu E."/>
            <person name="Kotani H."/>
            <person name="Miyajima N."/>
            <person name="Tabata S."/>
        </authorList>
    </citation>
    <scope>NUCLEOTIDE SEQUENCE [LARGE SCALE GENOMIC DNA]</scope>
    <source>
        <strain>cv. Columbia</strain>
    </source>
</reference>
<reference key="2">
    <citation type="journal article" date="2017" name="Plant J.">
        <title>Araport11: a complete reannotation of the Arabidopsis thaliana reference genome.</title>
        <authorList>
            <person name="Cheng C.Y."/>
            <person name="Krishnakumar V."/>
            <person name="Chan A.P."/>
            <person name="Thibaud-Nissen F."/>
            <person name="Schobel S."/>
            <person name="Town C.D."/>
        </authorList>
    </citation>
    <scope>GENOME REANNOTATION</scope>
    <source>
        <strain>cv. Columbia</strain>
    </source>
</reference>
<reference key="3">
    <citation type="journal article" date="2004" name="Prog. Lipid Res.">
        <title>GDSL family of serine esterases/lipases.</title>
        <authorList>
            <person name="Akoh C.C."/>
            <person name="Lee G.-C."/>
            <person name="Liaw Y.-C."/>
            <person name="Huang T.-H."/>
            <person name="Shaw J.-F."/>
        </authorList>
    </citation>
    <scope>REVIEW</scope>
</reference>
<reference key="4">
    <citation type="journal article" date="2008" name="Pak. J. Biol. Sci.">
        <title>Sequence analysis of GDSL lipase gene family in Arabidopsis thaliana.</title>
        <authorList>
            <person name="Ling H."/>
        </authorList>
    </citation>
    <scope>GENE FAMILY</scope>
</reference>
<keyword id="KW-0325">Glycoprotein</keyword>
<keyword id="KW-0378">Hydrolase</keyword>
<keyword id="KW-0442">Lipid degradation</keyword>
<keyword id="KW-0443">Lipid metabolism</keyword>
<keyword id="KW-1185">Reference proteome</keyword>
<keyword id="KW-0964">Secreted</keyword>
<keyword id="KW-0732">Signal</keyword>